<accession>Q57LX0</accession>
<feature type="chain" id="PRO_0000140636" description="Chorismate synthase">
    <location>
        <begin position="1"/>
        <end position="361"/>
    </location>
</feature>
<feature type="binding site" evidence="1">
    <location>
        <position position="48"/>
    </location>
    <ligand>
        <name>NADP(+)</name>
        <dbReference type="ChEBI" id="CHEBI:58349"/>
    </ligand>
</feature>
<feature type="binding site" evidence="1">
    <location>
        <position position="54"/>
    </location>
    <ligand>
        <name>NADP(+)</name>
        <dbReference type="ChEBI" id="CHEBI:58349"/>
    </ligand>
</feature>
<feature type="binding site" evidence="1">
    <location>
        <begin position="125"/>
        <end position="127"/>
    </location>
    <ligand>
        <name>FMN</name>
        <dbReference type="ChEBI" id="CHEBI:58210"/>
    </ligand>
</feature>
<feature type="binding site" evidence="1">
    <location>
        <begin position="238"/>
        <end position="239"/>
    </location>
    <ligand>
        <name>FMN</name>
        <dbReference type="ChEBI" id="CHEBI:58210"/>
    </ligand>
</feature>
<feature type="binding site" evidence="1">
    <location>
        <position position="278"/>
    </location>
    <ligand>
        <name>FMN</name>
        <dbReference type="ChEBI" id="CHEBI:58210"/>
    </ligand>
</feature>
<feature type="binding site" evidence="1">
    <location>
        <begin position="293"/>
        <end position="297"/>
    </location>
    <ligand>
        <name>FMN</name>
        <dbReference type="ChEBI" id="CHEBI:58210"/>
    </ligand>
</feature>
<feature type="binding site" evidence="1">
    <location>
        <position position="319"/>
    </location>
    <ligand>
        <name>FMN</name>
        <dbReference type="ChEBI" id="CHEBI:58210"/>
    </ligand>
</feature>
<evidence type="ECO:0000255" key="1">
    <source>
        <dbReference type="HAMAP-Rule" id="MF_00300"/>
    </source>
</evidence>
<comment type="function">
    <text evidence="1">Catalyzes the anti-1,4-elimination of the C-3 phosphate and the C-6 proR hydrogen from 5-enolpyruvylshikimate-3-phosphate (EPSP) to yield chorismate, which is the branch point compound that serves as the starting substrate for the three terminal pathways of aromatic amino acid biosynthesis. This reaction introduces a second double bond into the aromatic ring system.</text>
</comment>
<comment type="catalytic activity">
    <reaction evidence="1">
        <text>5-O-(1-carboxyvinyl)-3-phosphoshikimate = chorismate + phosphate</text>
        <dbReference type="Rhea" id="RHEA:21020"/>
        <dbReference type="ChEBI" id="CHEBI:29748"/>
        <dbReference type="ChEBI" id="CHEBI:43474"/>
        <dbReference type="ChEBI" id="CHEBI:57701"/>
        <dbReference type="EC" id="4.2.3.5"/>
    </reaction>
</comment>
<comment type="cofactor">
    <cofactor evidence="1">
        <name>FMNH2</name>
        <dbReference type="ChEBI" id="CHEBI:57618"/>
    </cofactor>
    <text evidence="1">Reduced FMN (FMNH(2)).</text>
</comment>
<comment type="pathway">
    <text evidence="1">Metabolic intermediate biosynthesis; chorismate biosynthesis; chorismate from D-erythrose 4-phosphate and phosphoenolpyruvate: step 7/7.</text>
</comment>
<comment type="subunit">
    <text evidence="1">Homotetramer.</text>
</comment>
<comment type="similarity">
    <text evidence="1">Belongs to the chorismate synthase family.</text>
</comment>
<gene>
    <name evidence="1" type="primary">aroC</name>
    <name type="ordered locus">SCH_2386</name>
</gene>
<organism>
    <name type="scientific">Salmonella choleraesuis (strain SC-B67)</name>
    <dbReference type="NCBI Taxonomy" id="321314"/>
    <lineage>
        <taxon>Bacteria</taxon>
        <taxon>Pseudomonadati</taxon>
        <taxon>Pseudomonadota</taxon>
        <taxon>Gammaproteobacteria</taxon>
        <taxon>Enterobacterales</taxon>
        <taxon>Enterobacteriaceae</taxon>
        <taxon>Salmonella</taxon>
    </lineage>
</organism>
<proteinExistence type="inferred from homology"/>
<reference key="1">
    <citation type="journal article" date="2005" name="Nucleic Acids Res.">
        <title>The genome sequence of Salmonella enterica serovar Choleraesuis, a highly invasive and resistant zoonotic pathogen.</title>
        <authorList>
            <person name="Chiu C.-H."/>
            <person name="Tang P."/>
            <person name="Chu C."/>
            <person name="Hu S."/>
            <person name="Bao Q."/>
            <person name="Yu J."/>
            <person name="Chou Y.-Y."/>
            <person name="Wang H.-S."/>
            <person name="Lee Y.-S."/>
        </authorList>
    </citation>
    <scope>NUCLEOTIDE SEQUENCE [LARGE SCALE GENOMIC DNA]</scope>
    <source>
        <strain>SC-B67</strain>
    </source>
</reference>
<name>AROC_SALCH</name>
<protein>
    <recommendedName>
        <fullName evidence="1">Chorismate synthase</fullName>
        <shortName evidence="1">CS</shortName>
        <ecNumber evidence="1">4.2.3.5</ecNumber>
    </recommendedName>
    <alternativeName>
        <fullName evidence="1">5-enolpyruvylshikimate-3-phosphate phospholyase</fullName>
    </alternativeName>
</protein>
<sequence>MAGNTIGQLFRVTTFGESHGLALGCIVDGVPPGIPLTEADLQHDLDRRRPGTSRYTTQRREPDQVKILSGVFDGVTTGTSIGLLIENTDQRSQDYSAIKDVFRPGHADYTYEQKYGLRDYRGGGRSSARETAMRVAAGAIAKKYLAEKFGIEIRGCLTQMGDIPLEIKDWRQVELNPFFCPDADKLDALDELMRALKKEGDSIGAKVTVMASGVPAGLGEPVFDRLDADIAHALMSINAVKGVEIGEGFNVVALRGSQNRDEITAQGFQSNHAGGILGGISSGQHIVAHMALKPTSSITVPGRTINRAGEEVEMITKGRHDPCVGIRAVPIAEAMLAIVLMDHLLRHRAQNADVKTEIPRW</sequence>
<dbReference type="EC" id="4.2.3.5" evidence="1"/>
<dbReference type="EMBL" id="AE017220">
    <property type="protein sequence ID" value="AAX66292.1"/>
    <property type="molecule type" value="Genomic_DNA"/>
</dbReference>
<dbReference type="RefSeq" id="WP_000918456.1">
    <property type="nucleotide sequence ID" value="NC_006905.1"/>
</dbReference>
<dbReference type="SMR" id="Q57LX0"/>
<dbReference type="KEGG" id="sec:SCH_2386"/>
<dbReference type="HOGENOM" id="CLU_034547_0_2_6"/>
<dbReference type="UniPathway" id="UPA00053">
    <property type="reaction ID" value="UER00090"/>
</dbReference>
<dbReference type="Proteomes" id="UP000000538">
    <property type="component" value="Chromosome"/>
</dbReference>
<dbReference type="GO" id="GO:0005829">
    <property type="term" value="C:cytosol"/>
    <property type="evidence" value="ECO:0007669"/>
    <property type="project" value="TreeGrafter"/>
</dbReference>
<dbReference type="GO" id="GO:0004107">
    <property type="term" value="F:chorismate synthase activity"/>
    <property type="evidence" value="ECO:0007669"/>
    <property type="project" value="UniProtKB-UniRule"/>
</dbReference>
<dbReference type="GO" id="GO:0010181">
    <property type="term" value="F:FMN binding"/>
    <property type="evidence" value="ECO:0007669"/>
    <property type="project" value="TreeGrafter"/>
</dbReference>
<dbReference type="GO" id="GO:0008652">
    <property type="term" value="P:amino acid biosynthetic process"/>
    <property type="evidence" value="ECO:0007669"/>
    <property type="project" value="UniProtKB-KW"/>
</dbReference>
<dbReference type="GO" id="GO:0009073">
    <property type="term" value="P:aromatic amino acid family biosynthetic process"/>
    <property type="evidence" value="ECO:0007669"/>
    <property type="project" value="UniProtKB-KW"/>
</dbReference>
<dbReference type="GO" id="GO:0009423">
    <property type="term" value="P:chorismate biosynthetic process"/>
    <property type="evidence" value="ECO:0007669"/>
    <property type="project" value="UniProtKB-UniRule"/>
</dbReference>
<dbReference type="CDD" id="cd07304">
    <property type="entry name" value="Chorismate_synthase"/>
    <property type="match status" value="1"/>
</dbReference>
<dbReference type="FunFam" id="3.60.150.10:FF:000001">
    <property type="entry name" value="Chorismate synthase"/>
    <property type="match status" value="1"/>
</dbReference>
<dbReference type="Gene3D" id="3.60.150.10">
    <property type="entry name" value="Chorismate synthase AroC"/>
    <property type="match status" value="1"/>
</dbReference>
<dbReference type="HAMAP" id="MF_00300">
    <property type="entry name" value="Chorismate_synth"/>
    <property type="match status" value="1"/>
</dbReference>
<dbReference type="InterPro" id="IPR000453">
    <property type="entry name" value="Chorismate_synth"/>
</dbReference>
<dbReference type="InterPro" id="IPR035904">
    <property type="entry name" value="Chorismate_synth_AroC_sf"/>
</dbReference>
<dbReference type="InterPro" id="IPR020541">
    <property type="entry name" value="Chorismate_synthase_CS"/>
</dbReference>
<dbReference type="NCBIfam" id="TIGR00033">
    <property type="entry name" value="aroC"/>
    <property type="match status" value="1"/>
</dbReference>
<dbReference type="NCBIfam" id="NF003793">
    <property type="entry name" value="PRK05382.1"/>
    <property type="match status" value="1"/>
</dbReference>
<dbReference type="PANTHER" id="PTHR21085">
    <property type="entry name" value="CHORISMATE SYNTHASE"/>
    <property type="match status" value="1"/>
</dbReference>
<dbReference type="PANTHER" id="PTHR21085:SF0">
    <property type="entry name" value="CHORISMATE SYNTHASE"/>
    <property type="match status" value="1"/>
</dbReference>
<dbReference type="Pfam" id="PF01264">
    <property type="entry name" value="Chorismate_synt"/>
    <property type="match status" value="1"/>
</dbReference>
<dbReference type="PIRSF" id="PIRSF001456">
    <property type="entry name" value="Chorismate_synth"/>
    <property type="match status" value="1"/>
</dbReference>
<dbReference type="SUPFAM" id="SSF103263">
    <property type="entry name" value="Chorismate synthase, AroC"/>
    <property type="match status" value="1"/>
</dbReference>
<dbReference type="PROSITE" id="PS00787">
    <property type="entry name" value="CHORISMATE_SYNTHASE_1"/>
    <property type="match status" value="1"/>
</dbReference>
<dbReference type="PROSITE" id="PS00788">
    <property type="entry name" value="CHORISMATE_SYNTHASE_2"/>
    <property type="match status" value="1"/>
</dbReference>
<dbReference type="PROSITE" id="PS00789">
    <property type="entry name" value="CHORISMATE_SYNTHASE_3"/>
    <property type="match status" value="1"/>
</dbReference>
<keyword id="KW-0028">Amino-acid biosynthesis</keyword>
<keyword id="KW-0057">Aromatic amino acid biosynthesis</keyword>
<keyword id="KW-0274">FAD</keyword>
<keyword id="KW-0285">Flavoprotein</keyword>
<keyword id="KW-0288">FMN</keyword>
<keyword id="KW-0456">Lyase</keyword>
<keyword id="KW-0521">NADP</keyword>